<proteinExistence type="inferred from homology"/>
<reference key="1">
    <citation type="journal article" date="2003" name="Proc. Natl. Acad. Sci. U.S.A.">
        <title>The complete genome sequence of Mycobacterium bovis.</title>
        <authorList>
            <person name="Garnier T."/>
            <person name="Eiglmeier K."/>
            <person name="Camus J.-C."/>
            <person name="Medina N."/>
            <person name="Mansoor H."/>
            <person name="Pryor M."/>
            <person name="Duthoy S."/>
            <person name="Grondin S."/>
            <person name="Lacroix C."/>
            <person name="Monsempe C."/>
            <person name="Simon S."/>
            <person name="Harris B."/>
            <person name="Atkin R."/>
            <person name="Doggett J."/>
            <person name="Mayes R."/>
            <person name="Keating L."/>
            <person name="Wheeler P.R."/>
            <person name="Parkhill J."/>
            <person name="Barrell B.G."/>
            <person name="Cole S.T."/>
            <person name="Gordon S.V."/>
            <person name="Hewinson R.G."/>
        </authorList>
    </citation>
    <scope>NUCLEOTIDE SEQUENCE [LARGE SCALE GENOMIC DNA]</scope>
    <source>
        <strain>ATCC BAA-935 / AF2122/97</strain>
    </source>
</reference>
<reference key="2">
    <citation type="journal article" date="2017" name="Genome Announc.">
        <title>Updated reference genome sequence and annotation of Mycobacterium bovis AF2122/97.</title>
        <authorList>
            <person name="Malone K.M."/>
            <person name="Farrell D."/>
            <person name="Stuber T.P."/>
            <person name="Schubert O.T."/>
            <person name="Aebersold R."/>
            <person name="Robbe-Austerman S."/>
            <person name="Gordon S.V."/>
        </authorList>
    </citation>
    <scope>NUCLEOTIDE SEQUENCE [LARGE SCALE GENOMIC DNA]</scope>
    <scope>GENOME REANNOTATION</scope>
    <source>
        <strain>ATCC BAA-935 / AF2122/97</strain>
    </source>
</reference>
<evidence type="ECO:0000255" key="1"/>
<evidence type="ECO:0000255" key="2">
    <source>
        <dbReference type="PROSITE-ProRule" id="PRU00099"/>
    </source>
</evidence>
<evidence type="ECO:0000255" key="3">
    <source>
        <dbReference type="PROSITE-ProRule" id="PRU00102"/>
    </source>
</evidence>
<evidence type="ECO:0000305" key="4"/>
<organism>
    <name type="scientific">Mycobacterium bovis (strain ATCC BAA-935 / AF2122/97)</name>
    <dbReference type="NCBI Taxonomy" id="233413"/>
    <lineage>
        <taxon>Bacteria</taxon>
        <taxon>Bacillati</taxon>
        <taxon>Actinomycetota</taxon>
        <taxon>Actinomycetes</taxon>
        <taxon>Mycobacteriales</taxon>
        <taxon>Mycobacteriaceae</taxon>
        <taxon>Mycobacterium</taxon>
        <taxon>Mycobacterium tuberculosis complex</taxon>
    </lineage>
</organism>
<keyword id="KW-1003">Cell membrane</keyword>
<keyword id="KW-0472">Membrane</keyword>
<keyword id="KW-1185">Reference proteome</keyword>
<keyword id="KW-0812">Transmembrane</keyword>
<keyword id="KW-1133">Transmembrane helix</keyword>
<dbReference type="EMBL" id="LT708304">
    <property type="protein sequence ID" value="SIT99956.1"/>
    <property type="molecule type" value="Genomic_DNA"/>
</dbReference>
<dbReference type="RefSeq" id="NP_855007.1">
    <property type="nucleotide sequence ID" value="NC_002945.3"/>
</dbReference>
<dbReference type="RefSeq" id="WP_003406867.1">
    <property type="nucleotide sequence ID" value="NC_002945.4"/>
</dbReference>
<dbReference type="SMR" id="P0A4Y3"/>
<dbReference type="KEGG" id="mbo:BQ2027_MB1353C"/>
<dbReference type="PATRIC" id="fig|233413.5.peg.1483"/>
<dbReference type="Proteomes" id="UP000001419">
    <property type="component" value="Chromosome"/>
</dbReference>
<dbReference type="GO" id="GO:0005886">
    <property type="term" value="C:plasma membrane"/>
    <property type="evidence" value="ECO:0007669"/>
    <property type="project" value="UniProtKB-SubCell"/>
</dbReference>
<dbReference type="GO" id="GO:0004016">
    <property type="term" value="F:adenylate cyclase activity"/>
    <property type="evidence" value="ECO:0007669"/>
    <property type="project" value="UniProtKB-ARBA"/>
</dbReference>
<dbReference type="GO" id="GO:0006171">
    <property type="term" value="P:cAMP biosynthetic process"/>
    <property type="evidence" value="ECO:0007669"/>
    <property type="project" value="TreeGrafter"/>
</dbReference>
<dbReference type="GO" id="GO:0035556">
    <property type="term" value="P:intracellular signal transduction"/>
    <property type="evidence" value="ECO:0007669"/>
    <property type="project" value="InterPro"/>
</dbReference>
<dbReference type="CDD" id="cd07302">
    <property type="entry name" value="CHD"/>
    <property type="match status" value="1"/>
</dbReference>
<dbReference type="CDD" id="cd06225">
    <property type="entry name" value="HAMP"/>
    <property type="match status" value="1"/>
</dbReference>
<dbReference type="FunFam" id="3.30.70.1230:FF:000016">
    <property type="entry name" value="Adenylate/guanylate cyclase domain-containing protein"/>
    <property type="match status" value="1"/>
</dbReference>
<dbReference type="Gene3D" id="6.10.340.10">
    <property type="match status" value="1"/>
</dbReference>
<dbReference type="Gene3D" id="3.30.70.1230">
    <property type="entry name" value="Nucleotide cyclase"/>
    <property type="match status" value="1"/>
</dbReference>
<dbReference type="InterPro" id="IPR001054">
    <property type="entry name" value="A/G_cyclase"/>
</dbReference>
<dbReference type="InterPro" id="IPR050697">
    <property type="entry name" value="Adenylyl/Guanylyl_Cyclase_3/4"/>
</dbReference>
<dbReference type="InterPro" id="IPR003660">
    <property type="entry name" value="HAMP_dom"/>
</dbReference>
<dbReference type="InterPro" id="IPR029787">
    <property type="entry name" value="Nucleotide_cyclase"/>
</dbReference>
<dbReference type="PANTHER" id="PTHR43081">
    <property type="entry name" value="ADENYLATE CYCLASE, TERMINAL-DIFFERENTIATION SPECIFIC-RELATED"/>
    <property type="match status" value="1"/>
</dbReference>
<dbReference type="PANTHER" id="PTHR43081:SF17">
    <property type="entry name" value="BLL5647 PROTEIN"/>
    <property type="match status" value="1"/>
</dbReference>
<dbReference type="Pfam" id="PF00211">
    <property type="entry name" value="Guanylate_cyc"/>
    <property type="match status" value="1"/>
</dbReference>
<dbReference type="Pfam" id="PF00672">
    <property type="entry name" value="HAMP"/>
    <property type="match status" value="1"/>
</dbReference>
<dbReference type="SMART" id="SM00044">
    <property type="entry name" value="CYCc"/>
    <property type="match status" value="1"/>
</dbReference>
<dbReference type="SMART" id="SM00304">
    <property type="entry name" value="HAMP"/>
    <property type="match status" value="1"/>
</dbReference>
<dbReference type="SUPFAM" id="SSF158472">
    <property type="entry name" value="HAMP domain-like"/>
    <property type="match status" value="1"/>
</dbReference>
<dbReference type="SUPFAM" id="SSF55073">
    <property type="entry name" value="Nucleotide cyclase"/>
    <property type="match status" value="1"/>
</dbReference>
<dbReference type="PROSITE" id="PS50125">
    <property type="entry name" value="GUANYLATE_CYCLASE_2"/>
    <property type="match status" value="1"/>
</dbReference>
<dbReference type="PROSITE" id="PS50885">
    <property type="entry name" value="HAMP"/>
    <property type="match status" value="1"/>
</dbReference>
<name>Y1353_MYCBO</name>
<accession>P0A4Y3</accession>
<accession>A0A1R3XYC7</accession>
<accession>Q10632</accession>
<accession>X2BI01</accession>
<feature type="chain" id="PRO_0000195753" description="Uncharacterized protein Mb1353c">
    <location>
        <begin position="1"/>
        <end position="535"/>
    </location>
</feature>
<feature type="transmembrane region" description="Helical" evidence="1">
    <location>
        <begin position="63"/>
        <end position="83"/>
    </location>
</feature>
<feature type="transmembrane region" description="Helical" evidence="1">
    <location>
        <begin position="90"/>
        <end position="110"/>
    </location>
</feature>
<feature type="transmembrane region" description="Helical" evidence="1">
    <location>
        <begin position="143"/>
        <end position="163"/>
    </location>
</feature>
<feature type="transmembrane region" description="Helical" evidence="1">
    <location>
        <begin position="168"/>
        <end position="188"/>
    </location>
</feature>
<feature type="transmembrane region" description="Helical" evidence="1">
    <location>
        <begin position="226"/>
        <end position="246"/>
    </location>
</feature>
<feature type="transmembrane region" description="Helical" evidence="1">
    <location>
        <begin position="258"/>
        <end position="278"/>
    </location>
</feature>
<feature type="domain" description="HAMP" evidence="3">
    <location>
        <begin position="279"/>
        <end position="330"/>
    </location>
</feature>
<feature type="domain" description="Guanylate cyclase" evidence="2">
    <location>
        <begin position="362"/>
        <end position="486"/>
    </location>
</feature>
<comment type="subcellular location">
    <subcellularLocation>
        <location evidence="4">Cell membrane</location>
        <topology evidence="4">Multi-pass membrane protein</topology>
    </subcellularLocation>
</comment>
<comment type="similarity">
    <text evidence="4">Belongs to the adenylyl cyclase class-3 family.</text>
</comment>
<gene>
    <name type="ordered locus">BQ2027_MB1353C</name>
</gene>
<sequence>MPAKKTMAQRLGQALETMTRQCGQLPETPAYGSWLLGRVSESPSRRWVRIKRIVTVYIMTANLTGIVVALLVVTFAFPVPSIYTDAPWWVTFGVAPAYATLALAIGTYWITTRIVRASIRWAIEERAPSQADGRNTLLLPFRVAAVHLILWDIGGALLATLYGLANRVFVTIILFSVTICGVLVATNCYLFTEFALRPVAAKALEAGRPPRRFAPGIMGRTMTVWSLGSGVPVTGIATTALYVLLVHNLTETQLASAVLILSITTLIFGFLVMWILAWLTAAPVRVVRAALKRVEQGDLRGDLVVFDGTELGELQRGFNAMVNGLRERERVRDLFGRHVGREVAAAAERERPQLGGEDRHAAVVFVDIVGSTQLVDNQPAAHVVKLLNRFFAIVVNEVDRHHGLINKFAGDAALAIFGAPNRLDRPEDAALAAARAIADRLANEMPEVQAGIGVAAGQIVAGNVGAKQRFEYTVVGKPVNQAARLCELAKSHPARLLASSDTLHAASETERAHWSLGETVTLRGHEQPTRLAVPT</sequence>
<protein>
    <recommendedName>
        <fullName>Uncharacterized protein Mb1353c</fullName>
    </recommendedName>
</protein>